<sequence>MKALARFGKAFGGYKMIDVPQPMCGPEDVVIEIKAAAICGADMKHYNVDSGSDEFNSIRGHEFAGCIAQVGEKVKDWKVGQRVVSDNSGHVCGVCPACEQGDFLCCTEKVNLGLDNNTWGGGFSKYCLVPGEILKIHRHALWEIPDGVDYEDAAVLDPICNAYKSIAQQSKFLPGQDVVVIGTGPLGLFSVQMARIMGAVNIVVVGLQEDVAVRFPVAKELGATAVVNGSTEDVVARCQQICGKDNLGLVIECSGANIALKQAIEMLRPNGEVVRVGMGFKPLDFSINDITAWNKSIIGHMAYDSTSWRNAIRLLASGAIKVKPMITHRIGLSQWREGFDAMVDKTAIKVIMTYDFDE</sequence>
<keyword id="KW-0479">Metal-binding</keyword>
<keyword id="KW-0560">Oxidoreductase</keyword>
<keyword id="KW-1185">Reference proteome</keyword>
<keyword id="KW-0862">Zinc</keyword>
<name>YDJL_ECOLI</name>
<evidence type="ECO:0000250" key="1"/>
<evidence type="ECO:0000305" key="2"/>
<organism>
    <name type="scientific">Escherichia coli (strain K12)</name>
    <dbReference type="NCBI Taxonomy" id="83333"/>
    <lineage>
        <taxon>Bacteria</taxon>
        <taxon>Pseudomonadati</taxon>
        <taxon>Pseudomonadota</taxon>
        <taxon>Gammaproteobacteria</taxon>
        <taxon>Enterobacterales</taxon>
        <taxon>Enterobacteriaceae</taxon>
        <taxon>Escherichia</taxon>
    </lineage>
</organism>
<comment type="cofactor">
    <cofactor evidence="1">
        <name>Zn(2+)</name>
        <dbReference type="ChEBI" id="CHEBI:29105"/>
    </cofactor>
    <text evidence="1">Binds 2 Zn(2+) ions per subunit.</text>
</comment>
<comment type="similarity">
    <text evidence="2">Belongs to the zinc-containing alcohol dehydrogenase family.</text>
</comment>
<protein>
    <recommendedName>
        <fullName>Uncharacterized zinc-type alcohol dehydrogenase-like protein YdjL</fullName>
        <ecNumber>1.-.-.-</ecNumber>
    </recommendedName>
</protein>
<reference key="1">
    <citation type="journal article" date="1996" name="DNA Res.">
        <title>A 570-kb DNA sequence of the Escherichia coli K-12 genome corresponding to the 28.0-40.1 min region on the linkage map.</title>
        <authorList>
            <person name="Aiba H."/>
            <person name="Baba T."/>
            <person name="Fujita K."/>
            <person name="Hayashi K."/>
            <person name="Inada T."/>
            <person name="Isono K."/>
            <person name="Itoh T."/>
            <person name="Kasai H."/>
            <person name="Kashimoto K."/>
            <person name="Kimura S."/>
            <person name="Kitakawa M."/>
            <person name="Kitagawa M."/>
            <person name="Makino K."/>
            <person name="Miki T."/>
            <person name="Mizobuchi K."/>
            <person name="Mori H."/>
            <person name="Mori T."/>
            <person name="Motomura K."/>
            <person name="Nakade S."/>
            <person name="Nakamura Y."/>
            <person name="Nashimoto H."/>
            <person name="Nishio Y."/>
            <person name="Oshima T."/>
            <person name="Saito N."/>
            <person name="Sampei G."/>
            <person name="Seki Y."/>
            <person name="Sivasundaram S."/>
            <person name="Tagami H."/>
            <person name="Takeda J."/>
            <person name="Takemoto K."/>
            <person name="Takeuchi Y."/>
            <person name="Wada C."/>
            <person name="Yamamoto Y."/>
            <person name="Horiuchi T."/>
        </authorList>
    </citation>
    <scope>NUCLEOTIDE SEQUENCE [LARGE SCALE GENOMIC DNA]</scope>
    <source>
        <strain>K12 / W3110 / ATCC 27325 / DSM 5911</strain>
    </source>
</reference>
<reference key="2">
    <citation type="journal article" date="1997" name="Science">
        <title>The complete genome sequence of Escherichia coli K-12.</title>
        <authorList>
            <person name="Blattner F.R."/>
            <person name="Plunkett G. III"/>
            <person name="Bloch C.A."/>
            <person name="Perna N.T."/>
            <person name="Burland V."/>
            <person name="Riley M."/>
            <person name="Collado-Vides J."/>
            <person name="Glasner J.D."/>
            <person name="Rode C.K."/>
            <person name="Mayhew G.F."/>
            <person name="Gregor J."/>
            <person name="Davis N.W."/>
            <person name="Kirkpatrick H.A."/>
            <person name="Goeden M.A."/>
            <person name="Rose D.J."/>
            <person name="Mau B."/>
            <person name="Shao Y."/>
        </authorList>
    </citation>
    <scope>NUCLEOTIDE SEQUENCE [LARGE SCALE GENOMIC DNA]</scope>
    <source>
        <strain>K12 / MG1655 / ATCC 47076</strain>
    </source>
</reference>
<reference key="3">
    <citation type="journal article" date="2006" name="Mol. Syst. Biol.">
        <title>Highly accurate genome sequences of Escherichia coli K-12 strains MG1655 and W3110.</title>
        <authorList>
            <person name="Hayashi K."/>
            <person name="Morooka N."/>
            <person name="Yamamoto Y."/>
            <person name="Fujita K."/>
            <person name="Isono K."/>
            <person name="Choi S."/>
            <person name="Ohtsubo E."/>
            <person name="Baba T."/>
            <person name="Wanner B.L."/>
            <person name="Mori H."/>
            <person name="Horiuchi T."/>
        </authorList>
    </citation>
    <scope>NUCLEOTIDE SEQUENCE [LARGE SCALE GENOMIC DNA]</scope>
    <source>
        <strain>K12 / W3110 / ATCC 27325 / DSM 5911</strain>
    </source>
</reference>
<dbReference type="EC" id="1.-.-.-"/>
<dbReference type="EMBL" id="U00096">
    <property type="protein sequence ID" value="AAC74846.1"/>
    <property type="molecule type" value="Genomic_DNA"/>
</dbReference>
<dbReference type="EMBL" id="AP009048">
    <property type="protein sequence ID" value="BAA15574.1"/>
    <property type="molecule type" value="Genomic_DNA"/>
</dbReference>
<dbReference type="PIR" id="H64937">
    <property type="entry name" value="H64937"/>
</dbReference>
<dbReference type="RefSeq" id="NP_416290.1">
    <property type="nucleotide sequence ID" value="NC_000913.3"/>
</dbReference>
<dbReference type="RefSeq" id="WP_000645221.1">
    <property type="nucleotide sequence ID" value="NZ_SSZK01000001.1"/>
</dbReference>
<dbReference type="SMR" id="P77539"/>
<dbReference type="BioGRID" id="4262036">
    <property type="interactions" value="9"/>
</dbReference>
<dbReference type="BioGRID" id="850656">
    <property type="interactions" value="1"/>
</dbReference>
<dbReference type="DIP" id="DIP-11774N"/>
<dbReference type="FunCoup" id="P77539">
    <property type="interactions" value="117"/>
</dbReference>
<dbReference type="IntAct" id="P77539">
    <property type="interactions" value="1"/>
</dbReference>
<dbReference type="STRING" id="511145.b1776"/>
<dbReference type="jPOST" id="P77539"/>
<dbReference type="PaxDb" id="511145-b1776"/>
<dbReference type="EnsemblBacteria" id="AAC74846">
    <property type="protein sequence ID" value="AAC74846"/>
    <property type="gene ID" value="b1776"/>
</dbReference>
<dbReference type="GeneID" id="946299"/>
<dbReference type="KEGG" id="ecj:JW1765"/>
<dbReference type="KEGG" id="eco:b1776"/>
<dbReference type="KEGG" id="ecoc:C3026_10135"/>
<dbReference type="PATRIC" id="fig|1411691.4.peg.478"/>
<dbReference type="EchoBASE" id="EB3261"/>
<dbReference type="eggNOG" id="COG1063">
    <property type="taxonomic scope" value="Bacteria"/>
</dbReference>
<dbReference type="HOGENOM" id="CLU_026673_11_0_6"/>
<dbReference type="InParanoid" id="P77539"/>
<dbReference type="OMA" id="TNCCLKA"/>
<dbReference type="OrthoDB" id="9773078at2"/>
<dbReference type="PhylomeDB" id="P77539"/>
<dbReference type="BioCyc" id="EcoCyc:G6963-MONOMER"/>
<dbReference type="PRO" id="PR:P77539"/>
<dbReference type="Proteomes" id="UP000000625">
    <property type="component" value="Chromosome"/>
</dbReference>
<dbReference type="GO" id="GO:0016491">
    <property type="term" value="F:oxidoreductase activity"/>
    <property type="evidence" value="ECO:0007669"/>
    <property type="project" value="UniProtKB-KW"/>
</dbReference>
<dbReference type="GO" id="GO:0008270">
    <property type="term" value="F:zinc ion binding"/>
    <property type="evidence" value="ECO:0007669"/>
    <property type="project" value="InterPro"/>
</dbReference>
<dbReference type="CDD" id="cd08258">
    <property type="entry name" value="Zn_ADH4"/>
    <property type="match status" value="1"/>
</dbReference>
<dbReference type="Gene3D" id="3.90.180.10">
    <property type="entry name" value="Medium-chain alcohol dehydrogenases, catalytic domain"/>
    <property type="match status" value="1"/>
</dbReference>
<dbReference type="Gene3D" id="3.40.50.720">
    <property type="entry name" value="NAD(P)-binding Rossmann-like Domain"/>
    <property type="match status" value="1"/>
</dbReference>
<dbReference type="InterPro" id="IPR013149">
    <property type="entry name" value="ADH-like_C"/>
</dbReference>
<dbReference type="InterPro" id="IPR013154">
    <property type="entry name" value="ADH-like_N"/>
</dbReference>
<dbReference type="InterPro" id="IPR002328">
    <property type="entry name" value="ADH_Zn_CS"/>
</dbReference>
<dbReference type="InterPro" id="IPR011032">
    <property type="entry name" value="GroES-like_sf"/>
</dbReference>
<dbReference type="InterPro" id="IPR036291">
    <property type="entry name" value="NAD(P)-bd_dom_sf"/>
</dbReference>
<dbReference type="InterPro" id="IPR050129">
    <property type="entry name" value="Zn_alcohol_dh"/>
</dbReference>
<dbReference type="PANTHER" id="PTHR43401">
    <property type="entry name" value="L-THREONINE 3-DEHYDROGENASE"/>
    <property type="match status" value="1"/>
</dbReference>
<dbReference type="PANTHER" id="PTHR43401:SF2">
    <property type="entry name" value="L-THREONINE 3-DEHYDROGENASE"/>
    <property type="match status" value="1"/>
</dbReference>
<dbReference type="Pfam" id="PF08240">
    <property type="entry name" value="ADH_N"/>
    <property type="match status" value="1"/>
</dbReference>
<dbReference type="Pfam" id="PF00107">
    <property type="entry name" value="ADH_zinc_N"/>
    <property type="match status" value="1"/>
</dbReference>
<dbReference type="SUPFAM" id="SSF50129">
    <property type="entry name" value="GroES-like"/>
    <property type="match status" value="1"/>
</dbReference>
<dbReference type="SUPFAM" id="SSF51735">
    <property type="entry name" value="NAD(P)-binding Rossmann-fold domains"/>
    <property type="match status" value="1"/>
</dbReference>
<dbReference type="PROSITE" id="PS00059">
    <property type="entry name" value="ADH_ZINC"/>
    <property type="match status" value="1"/>
</dbReference>
<feature type="chain" id="PRO_0000160893" description="Uncharacterized zinc-type alcohol dehydrogenase-like protein YdjL">
    <location>
        <begin position="1"/>
        <end position="358"/>
    </location>
</feature>
<feature type="binding site">
    <location>
        <position position="39"/>
    </location>
    <ligand>
        <name>Zn(2+)</name>
        <dbReference type="ChEBI" id="CHEBI:29105"/>
        <label>1</label>
        <note>catalytic</note>
    </ligand>
</feature>
<feature type="binding site" evidence="1">
    <location>
        <position position="61"/>
    </location>
    <ligand>
        <name>Zn(2+)</name>
        <dbReference type="ChEBI" id="CHEBI:29105"/>
        <label>1</label>
        <note>catalytic</note>
    </ligand>
</feature>
<feature type="binding site" evidence="1">
    <location>
        <position position="92"/>
    </location>
    <ligand>
        <name>Zn(2+)</name>
        <dbReference type="ChEBI" id="CHEBI:29105"/>
        <label>2</label>
    </ligand>
</feature>
<feature type="binding site" evidence="1">
    <location>
        <position position="95"/>
    </location>
    <ligand>
        <name>Zn(2+)</name>
        <dbReference type="ChEBI" id="CHEBI:29105"/>
        <label>2</label>
    </ligand>
</feature>
<feature type="binding site" evidence="1">
    <location>
        <position position="98"/>
    </location>
    <ligand>
        <name>Zn(2+)</name>
        <dbReference type="ChEBI" id="CHEBI:29105"/>
        <label>2</label>
    </ligand>
</feature>
<feature type="binding site" evidence="1">
    <location>
        <position position="106"/>
    </location>
    <ligand>
        <name>Zn(2+)</name>
        <dbReference type="ChEBI" id="CHEBI:29105"/>
        <label>2</label>
    </ligand>
</feature>
<feature type="binding site" evidence="1">
    <location>
        <position position="157"/>
    </location>
    <ligand>
        <name>Zn(2+)</name>
        <dbReference type="ChEBI" id="CHEBI:29105"/>
        <label>1</label>
        <note>catalytic</note>
    </ligand>
</feature>
<gene>
    <name type="primary">ydjL</name>
    <name type="ordered locus">b1776</name>
    <name type="ordered locus">JW1765</name>
</gene>
<accession>P77539</accession>
<proteinExistence type="inferred from homology"/>